<comment type="function">
    <text evidence="1">Converts 4-carboxy-5-aminoimidazole ribonucleotide (CAIR) to 4-(N-succinylcarboxamide)-5-aminoimidazole ribonucleotide (SAICAR).</text>
</comment>
<comment type="catalytic activity">
    <reaction evidence="1">
        <text>5-amino-1-(5-phospho-D-ribosyl)imidazole-4-carboxylate + L-aspartate + ATP = (2S)-2-[5-amino-1-(5-phospho-beta-D-ribosyl)imidazole-4-carboxamido]succinate + ADP + phosphate + 2 H(+)</text>
        <dbReference type="Rhea" id="RHEA:22628"/>
        <dbReference type="ChEBI" id="CHEBI:15378"/>
        <dbReference type="ChEBI" id="CHEBI:29991"/>
        <dbReference type="ChEBI" id="CHEBI:30616"/>
        <dbReference type="ChEBI" id="CHEBI:43474"/>
        <dbReference type="ChEBI" id="CHEBI:58443"/>
        <dbReference type="ChEBI" id="CHEBI:77657"/>
        <dbReference type="ChEBI" id="CHEBI:456216"/>
        <dbReference type="EC" id="6.3.2.6"/>
    </reaction>
</comment>
<comment type="pathway">
    <text>Purine metabolism; IMP biosynthesis via de novo pathway; 5-amino-1-(5-phospho-D-ribosyl)imidazole-4-carboxamide from 5-amino-1-(5-phospho-D-ribosyl)imidazole-4-carboxylate: step 1/2.</text>
</comment>
<comment type="subunit">
    <text>Homotrimer.</text>
</comment>
<comment type="similarity">
    <text evidence="2">Belongs to the SAICAR synthetase family.</text>
</comment>
<feature type="chain" id="PRO_0000100825" description="Phosphoribosylaminoimidazole-succinocarboxamide synthase">
    <location>
        <begin position="1"/>
        <end position="237"/>
    </location>
</feature>
<feature type="strand" evidence="3">
    <location>
        <begin position="5"/>
        <end position="9"/>
    </location>
</feature>
<feature type="strand" evidence="3">
    <location>
        <begin position="11"/>
        <end position="17"/>
    </location>
</feature>
<feature type="strand" evidence="3">
    <location>
        <begin position="23"/>
        <end position="28"/>
    </location>
</feature>
<feature type="strand" evidence="3">
    <location>
        <begin position="30"/>
        <end position="32"/>
    </location>
</feature>
<feature type="turn" evidence="3">
    <location>
        <begin position="35"/>
        <end position="38"/>
    </location>
</feature>
<feature type="strand" evidence="4">
    <location>
        <begin position="39"/>
        <end position="42"/>
    </location>
</feature>
<feature type="helix" evidence="3">
    <location>
        <begin position="46"/>
        <end position="63"/>
    </location>
</feature>
<feature type="strand" evidence="3">
    <location>
        <begin position="70"/>
        <end position="73"/>
    </location>
</feature>
<feature type="strand" evidence="3">
    <location>
        <begin position="75"/>
        <end position="82"/>
    </location>
</feature>
<feature type="strand" evidence="3">
    <location>
        <begin position="88"/>
        <end position="96"/>
    </location>
</feature>
<feature type="helix" evidence="3">
    <location>
        <begin position="99"/>
        <end position="105"/>
    </location>
</feature>
<feature type="strand" evidence="3">
    <location>
        <begin position="112"/>
        <end position="122"/>
    </location>
</feature>
<feature type="helix" evidence="3">
    <location>
        <begin position="125"/>
        <end position="127"/>
    </location>
</feature>
<feature type="helix" evidence="3">
    <location>
        <begin position="134"/>
        <end position="139"/>
    </location>
</feature>
<feature type="helix" evidence="3">
    <location>
        <begin position="145"/>
        <end position="168"/>
    </location>
</feature>
<feature type="strand" evidence="3">
    <location>
        <begin position="171"/>
        <end position="183"/>
    </location>
</feature>
<feature type="strand" evidence="3">
    <location>
        <begin position="186"/>
        <end position="191"/>
    </location>
</feature>
<feature type="strand" evidence="3">
    <location>
        <begin position="197"/>
        <end position="202"/>
    </location>
</feature>
<feature type="turn" evidence="3">
    <location>
        <begin position="203"/>
        <end position="205"/>
    </location>
</feature>
<feature type="helix" evidence="3">
    <location>
        <begin position="212"/>
        <end position="215"/>
    </location>
</feature>
<feature type="helix" evidence="3">
    <location>
        <begin position="221"/>
        <end position="232"/>
    </location>
</feature>
<gene>
    <name type="primary">purC</name>
    <name type="ordered locus">b2476</name>
    <name type="ordered locus">JW2461</name>
</gene>
<accession>P0A7D7</accession>
<accession>P21155</accession>
<evidence type="ECO:0000269" key="1">
    <source>
    </source>
</evidence>
<evidence type="ECO:0000305" key="2"/>
<evidence type="ECO:0007829" key="3">
    <source>
        <dbReference type="PDB" id="2GQR"/>
    </source>
</evidence>
<evidence type="ECO:0007829" key="4">
    <source>
        <dbReference type="PDB" id="2GQS"/>
    </source>
</evidence>
<protein>
    <recommendedName>
        <fullName>Phosphoribosylaminoimidazole-succinocarboxamide synthase</fullName>
        <ecNumber evidence="1">6.3.2.6</ecNumber>
    </recommendedName>
    <alternativeName>
        <fullName>SAICAR synthetase</fullName>
    </alternativeName>
</protein>
<keyword id="KW-0002">3D-structure</keyword>
<keyword id="KW-0067">ATP-binding</keyword>
<keyword id="KW-0903">Direct protein sequencing</keyword>
<keyword id="KW-0436">Ligase</keyword>
<keyword id="KW-0547">Nucleotide-binding</keyword>
<keyword id="KW-0658">Purine biosynthesis</keyword>
<keyword id="KW-1185">Reference proteome</keyword>
<reference key="1">
    <citation type="journal article" date="1990" name="J. Bacteriol.">
        <title>DNA sequence of the purC gene encoding 5'-phosphoribosyl-5-aminoimidazole-4-N-succinocarboxamide synthetase and organization of the dapA-purC region of Escherichia coli K-12.</title>
        <authorList>
            <person name="Tiedemann A.A."/>
            <person name="Demarini D.J."/>
            <person name="Parker J."/>
            <person name="Smith J.M."/>
        </authorList>
    </citation>
    <scope>NUCLEOTIDE SEQUENCE [GENOMIC DNA]</scope>
    <scope>PARTIAL PROTEIN SEQUENCE</scope>
    <source>
        <strain>K12</strain>
    </source>
</reference>
<reference key="2">
    <citation type="journal article" date="1997" name="DNA Res.">
        <title>Construction of a contiguous 874-kb sequence of the Escherichia coli-K12 genome corresponding to 50.0-68.8 min on the linkage map and analysis of its sequence features.</title>
        <authorList>
            <person name="Yamamoto Y."/>
            <person name="Aiba H."/>
            <person name="Baba T."/>
            <person name="Hayashi K."/>
            <person name="Inada T."/>
            <person name="Isono K."/>
            <person name="Itoh T."/>
            <person name="Kimura S."/>
            <person name="Kitagawa M."/>
            <person name="Makino K."/>
            <person name="Miki T."/>
            <person name="Mitsuhashi N."/>
            <person name="Mizobuchi K."/>
            <person name="Mori H."/>
            <person name="Nakade S."/>
            <person name="Nakamura Y."/>
            <person name="Nashimoto H."/>
            <person name="Oshima T."/>
            <person name="Oyama S."/>
            <person name="Saito N."/>
            <person name="Sampei G."/>
            <person name="Satoh Y."/>
            <person name="Sivasundaram S."/>
            <person name="Tagami H."/>
            <person name="Takahashi H."/>
            <person name="Takeda J."/>
            <person name="Takemoto K."/>
            <person name="Uehara K."/>
            <person name="Wada C."/>
            <person name="Yamagata S."/>
            <person name="Horiuchi T."/>
        </authorList>
    </citation>
    <scope>NUCLEOTIDE SEQUENCE [LARGE SCALE GENOMIC DNA]</scope>
    <source>
        <strain>K12 / W3110 / ATCC 27325 / DSM 5911</strain>
    </source>
</reference>
<reference key="3">
    <citation type="journal article" date="1997" name="Science">
        <title>The complete genome sequence of Escherichia coli K-12.</title>
        <authorList>
            <person name="Blattner F.R."/>
            <person name="Plunkett G. III"/>
            <person name="Bloch C.A."/>
            <person name="Perna N.T."/>
            <person name="Burland V."/>
            <person name="Riley M."/>
            <person name="Collado-Vides J."/>
            <person name="Glasner J.D."/>
            <person name="Rode C.K."/>
            <person name="Mayhew G.F."/>
            <person name="Gregor J."/>
            <person name="Davis N.W."/>
            <person name="Kirkpatrick H.A."/>
            <person name="Goeden M.A."/>
            <person name="Rose D.J."/>
            <person name="Mau B."/>
            <person name="Shao Y."/>
        </authorList>
    </citation>
    <scope>NUCLEOTIDE SEQUENCE [LARGE SCALE GENOMIC DNA]</scope>
    <source>
        <strain>K12 / MG1655 / ATCC 47076</strain>
    </source>
</reference>
<reference key="4">
    <citation type="journal article" date="2006" name="Mol. Syst. Biol.">
        <title>Highly accurate genome sequences of Escherichia coli K-12 strains MG1655 and W3110.</title>
        <authorList>
            <person name="Hayashi K."/>
            <person name="Morooka N."/>
            <person name="Yamamoto Y."/>
            <person name="Fujita K."/>
            <person name="Isono K."/>
            <person name="Choi S."/>
            <person name="Ohtsubo E."/>
            <person name="Baba T."/>
            <person name="Wanner B.L."/>
            <person name="Mori H."/>
            <person name="Horiuchi T."/>
        </authorList>
    </citation>
    <scope>NUCLEOTIDE SEQUENCE [LARGE SCALE GENOMIC DNA]</scope>
    <source>
        <strain>K12 / W3110 / ATCC 27325 / DSM 5911</strain>
    </source>
</reference>
<reference key="5">
    <citation type="journal article" date="1991" name="J. Bacteriol.">
        <title>A gene for a new lipoprotein in the dapA-purC interval of the Escherichia coli chromosome.</title>
        <authorList>
            <person name="Bouvier J."/>
            <person name="Pugsley A.P."/>
            <person name="Stragier P."/>
        </authorList>
    </citation>
    <scope>NUCLEOTIDE SEQUENCE [GENOMIC DNA] OF 1-28</scope>
    <source>
        <strain>K12</strain>
    </source>
</reference>
<reference key="6">
    <citation type="journal article" date="1997" name="Electrophoresis">
        <title>Comparing the predicted and observed properties of proteins encoded in the genome of Escherichia coli K-12.</title>
        <authorList>
            <person name="Link A.J."/>
            <person name="Robison K."/>
            <person name="Church G.M."/>
        </authorList>
    </citation>
    <scope>PROTEIN SEQUENCE OF 1-12</scope>
    <source>
        <strain>K12 / EMG2</strain>
    </source>
</reference>
<reference key="7">
    <citation type="journal article" date="1992" name="Biochemistry">
        <title>Purification and characterization of the purE, purK, and purC gene products: identification of a previously unrecognized energy requirement in the purine biosynthetic pathway.</title>
        <authorList>
            <person name="Meyer E."/>
            <person name="Leonard N.J."/>
            <person name="Bhat B."/>
            <person name="Stubbe J."/>
            <person name="Smith J.M."/>
        </authorList>
    </citation>
    <scope>CATALYTIC ACTIVITY</scope>
    <scope>FUNCTION</scope>
</reference>
<reference key="8">
    <citation type="journal article" date="1997" name="Electrophoresis">
        <title>Escherichia coli proteome analysis using the gene-protein database.</title>
        <authorList>
            <person name="VanBogelen R.A."/>
            <person name="Abshire K.Z."/>
            <person name="Moldover B."/>
            <person name="Olson E.R."/>
            <person name="Neidhardt F.C."/>
        </authorList>
    </citation>
    <scope>IDENTIFICATION BY 2D-GEL</scope>
</reference>
<proteinExistence type="evidence at protein level"/>
<sequence>MQKQAELYRGKAKTVYSTENPDLLVLEFRNDTSAGDGARIEQFDRKGMVNNKFNYFIMSKLAEAGIPTQMERLLSDTECLVKKLDMVPVECVVRNRAAGSLVKRLGIEEGIELNPPLFDLFLKNDAMHDPMVNESYCETFGWVSKENLARMKELTYKANDVLKKLFDDAGLILVDFKLEFGLYKGEVVLGDEFSPDGSRLWDKETLEKMDKDRFRQSLGGLIEAYEAVARRLGVQLD</sequence>
<dbReference type="EC" id="6.3.2.6" evidence="1"/>
<dbReference type="EMBL" id="M33928">
    <property type="protein sequence ID" value="AAA24448.1"/>
    <property type="molecule type" value="Genomic_DNA"/>
</dbReference>
<dbReference type="EMBL" id="U00096">
    <property type="protein sequence ID" value="AAC75529.1"/>
    <property type="molecule type" value="Genomic_DNA"/>
</dbReference>
<dbReference type="EMBL" id="AP009048">
    <property type="protein sequence ID" value="BAA16353.1"/>
    <property type="molecule type" value="Genomic_DNA"/>
</dbReference>
<dbReference type="EMBL" id="X57402">
    <property type="protein sequence ID" value="CAA40662.1"/>
    <property type="molecule type" value="Genomic_DNA"/>
</dbReference>
<dbReference type="PIR" id="C36146">
    <property type="entry name" value="C36146"/>
</dbReference>
<dbReference type="RefSeq" id="NP_416971.1">
    <property type="nucleotide sequence ID" value="NC_000913.3"/>
</dbReference>
<dbReference type="RefSeq" id="WP_001295467.1">
    <property type="nucleotide sequence ID" value="NZ_STEB01000011.1"/>
</dbReference>
<dbReference type="PDB" id="2GQR">
    <property type="method" value="X-ray"/>
    <property type="resolution" value="2.00 A"/>
    <property type="chains" value="A/B=1-237"/>
</dbReference>
<dbReference type="PDB" id="2GQS">
    <property type="method" value="X-ray"/>
    <property type="resolution" value="2.05 A"/>
    <property type="chains" value="A/B=1-237"/>
</dbReference>
<dbReference type="PDBsum" id="2GQR"/>
<dbReference type="PDBsum" id="2GQS"/>
<dbReference type="SMR" id="P0A7D7"/>
<dbReference type="BioGRID" id="4261983">
    <property type="interactions" value="55"/>
</dbReference>
<dbReference type="BioGRID" id="851296">
    <property type="interactions" value="7"/>
</dbReference>
<dbReference type="DIP" id="DIP-35900N"/>
<dbReference type="FunCoup" id="P0A7D7">
    <property type="interactions" value="776"/>
</dbReference>
<dbReference type="IntAct" id="P0A7D7">
    <property type="interactions" value="17"/>
</dbReference>
<dbReference type="STRING" id="511145.b2476"/>
<dbReference type="jPOST" id="P0A7D7"/>
<dbReference type="PaxDb" id="511145-b2476"/>
<dbReference type="EnsemblBacteria" id="AAC75529">
    <property type="protein sequence ID" value="AAC75529"/>
    <property type="gene ID" value="b2476"/>
</dbReference>
<dbReference type="GeneID" id="89517285"/>
<dbReference type="GeneID" id="946957"/>
<dbReference type="KEGG" id="ecj:JW2461"/>
<dbReference type="KEGG" id="eco:b2476"/>
<dbReference type="KEGG" id="ecoc:C3026_13740"/>
<dbReference type="PATRIC" id="fig|1411691.4.peg.4263"/>
<dbReference type="EchoBASE" id="EB0784"/>
<dbReference type="eggNOG" id="COG0152">
    <property type="taxonomic scope" value="Bacteria"/>
</dbReference>
<dbReference type="HOGENOM" id="CLU_061495_2_1_6"/>
<dbReference type="InParanoid" id="P0A7D7"/>
<dbReference type="OMA" id="EFCYKND"/>
<dbReference type="OrthoDB" id="9801549at2"/>
<dbReference type="PhylomeDB" id="P0A7D7"/>
<dbReference type="BioCyc" id="EcoCyc:SAICARSYN-MONOMER"/>
<dbReference type="BioCyc" id="MetaCyc:SAICARSYN-MONOMER"/>
<dbReference type="BRENDA" id="6.3.2.6">
    <property type="organism ID" value="2026"/>
</dbReference>
<dbReference type="UniPathway" id="UPA00074">
    <property type="reaction ID" value="UER00131"/>
</dbReference>
<dbReference type="EvolutionaryTrace" id="P0A7D7"/>
<dbReference type="PRO" id="PR:P0A7D7"/>
<dbReference type="Proteomes" id="UP000000625">
    <property type="component" value="Chromosome"/>
</dbReference>
<dbReference type="GO" id="GO:0005829">
    <property type="term" value="C:cytosol"/>
    <property type="evidence" value="ECO:0000314"/>
    <property type="project" value="EcoCyc"/>
</dbReference>
<dbReference type="GO" id="GO:0016020">
    <property type="term" value="C:membrane"/>
    <property type="evidence" value="ECO:0007005"/>
    <property type="project" value="UniProtKB"/>
</dbReference>
<dbReference type="GO" id="GO:0005524">
    <property type="term" value="F:ATP binding"/>
    <property type="evidence" value="ECO:0007669"/>
    <property type="project" value="UniProtKB-KW"/>
</dbReference>
<dbReference type="GO" id="GO:0097216">
    <property type="term" value="F:guanosine tetraphosphate binding"/>
    <property type="evidence" value="ECO:0000314"/>
    <property type="project" value="EcoCyc"/>
</dbReference>
<dbReference type="GO" id="GO:0004639">
    <property type="term" value="F:phosphoribosylaminoimidazolesuccinocarboxamide synthase activity"/>
    <property type="evidence" value="ECO:0000314"/>
    <property type="project" value="EcoCyc"/>
</dbReference>
<dbReference type="GO" id="GO:0006189">
    <property type="term" value="P:'de novo' IMP biosynthetic process"/>
    <property type="evidence" value="ECO:0007669"/>
    <property type="project" value="UniProtKB-UniRule"/>
</dbReference>
<dbReference type="GO" id="GO:0009236">
    <property type="term" value="P:cobalamin biosynthetic process"/>
    <property type="evidence" value="ECO:0007669"/>
    <property type="project" value="InterPro"/>
</dbReference>
<dbReference type="CDD" id="cd01415">
    <property type="entry name" value="SAICAR_synt_PurC"/>
    <property type="match status" value="1"/>
</dbReference>
<dbReference type="FunFam" id="3.30.200.20:FF:000086">
    <property type="entry name" value="Phosphoribosylaminoimidazole-succinocarboxamide synthase"/>
    <property type="match status" value="1"/>
</dbReference>
<dbReference type="FunFam" id="3.30.470.20:FF:000006">
    <property type="entry name" value="Phosphoribosylaminoimidazole-succinocarboxamide synthase"/>
    <property type="match status" value="1"/>
</dbReference>
<dbReference type="Gene3D" id="3.30.470.20">
    <property type="entry name" value="ATP-grasp fold, B domain"/>
    <property type="match status" value="1"/>
</dbReference>
<dbReference type="Gene3D" id="3.30.200.20">
    <property type="entry name" value="Phosphorylase Kinase, domain 1"/>
    <property type="match status" value="1"/>
</dbReference>
<dbReference type="HAMAP" id="MF_00137">
    <property type="entry name" value="SAICAR_synth"/>
    <property type="match status" value="1"/>
</dbReference>
<dbReference type="InterPro" id="IPR028923">
    <property type="entry name" value="SAICAR_synt/ADE2_N"/>
</dbReference>
<dbReference type="InterPro" id="IPR033934">
    <property type="entry name" value="SAICAR_synt_PurC"/>
</dbReference>
<dbReference type="InterPro" id="IPR001636">
    <property type="entry name" value="SAICAR_synth"/>
</dbReference>
<dbReference type="InterPro" id="IPR050089">
    <property type="entry name" value="SAICAR_synthetase"/>
</dbReference>
<dbReference type="InterPro" id="IPR018236">
    <property type="entry name" value="SAICAR_synthetase_CS"/>
</dbReference>
<dbReference type="NCBIfam" id="TIGR00081">
    <property type="entry name" value="purC"/>
    <property type="match status" value="1"/>
</dbReference>
<dbReference type="PANTHER" id="PTHR43599">
    <property type="entry name" value="MULTIFUNCTIONAL PROTEIN ADE2"/>
    <property type="match status" value="1"/>
</dbReference>
<dbReference type="PANTHER" id="PTHR43599:SF3">
    <property type="entry name" value="SI:DKEY-6E2.2"/>
    <property type="match status" value="1"/>
</dbReference>
<dbReference type="Pfam" id="PF01259">
    <property type="entry name" value="SAICAR_synt"/>
    <property type="match status" value="1"/>
</dbReference>
<dbReference type="SUPFAM" id="SSF56104">
    <property type="entry name" value="SAICAR synthase-like"/>
    <property type="match status" value="1"/>
</dbReference>
<dbReference type="PROSITE" id="PS01057">
    <property type="entry name" value="SAICAR_SYNTHETASE_1"/>
    <property type="match status" value="1"/>
</dbReference>
<dbReference type="PROSITE" id="PS01058">
    <property type="entry name" value="SAICAR_SYNTHETASE_2"/>
    <property type="match status" value="1"/>
</dbReference>
<organism>
    <name type="scientific">Escherichia coli (strain K12)</name>
    <dbReference type="NCBI Taxonomy" id="83333"/>
    <lineage>
        <taxon>Bacteria</taxon>
        <taxon>Pseudomonadati</taxon>
        <taxon>Pseudomonadota</taxon>
        <taxon>Gammaproteobacteria</taxon>
        <taxon>Enterobacterales</taxon>
        <taxon>Enterobacteriaceae</taxon>
        <taxon>Escherichia</taxon>
    </lineage>
</organism>
<name>PUR7_ECOLI</name>